<sequence length="324" mass="34914">MKQVDGEKLLARLGPGVDALRGRLTPDAPMDRVTWFQAGGLAELMFQPHDRDDLVTFLKLLPDDVPLTVVGVGSNLLVRDGGIPGVVIRLSAKGFGGLELEGENRIRAGAICPDKHIAAMAMDNNIGGFAFYYGIPGSIGGALRMNAGANGGETAERVIEVEAVDRQGNLHVLSKADMGYGYRHSSAPEGLIFISGLFEGFSQEKSAIRAEMDAVRQHRETVQPVKEKTGGSTFKNPEGHSAWELIDEVGGRGLMIGGAQMSSLHCNFMINVGHATAYDLEYLGETIRGQVFEQSGIKLQWEIKRLGLFMPGSEVKPFMGVTSE</sequence>
<accession>B9JY52</accession>
<comment type="function">
    <text evidence="1">Cell wall formation.</text>
</comment>
<comment type="catalytic activity">
    <reaction evidence="1">
        <text>UDP-N-acetyl-alpha-D-muramate + NADP(+) = UDP-N-acetyl-3-O-(1-carboxyvinyl)-alpha-D-glucosamine + NADPH + H(+)</text>
        <dbReference type="Rhea" id="RHEA:12248"/>
        <dbReference type="ChEBI" id="CHEBI:15378"/>
        <dbReference type="ChEBI" id="CHEBI:57783"/>
        <dbReference type="ChEBI" id="CHEBI:58349"/>
        <dbReference type="ChEBI" id="CHEBI:68483"/>
        <dbReference type="ChEBI" id="CHEBI:70757"/>
        <dbReference type="EC" id="1.3.1.98"/>
    </reaction>
</comment>
<comment type="cofactor">
    <cofactor evidence="1">
        <name>FAD</name>
        <dbReference type="ChEBI" id="CHEBI:57692"/>
    </cofactor>
</comment>
<comment type="pathway">
    <text evidence="1">Cell wall biogenesis; peptidoglycan biosynthesis.</text>
</comment>
<comment type="subcellular location">
    <subcellularLocation>
        <location evidence="1">Cytoplasm</location>
    </subcellularLocation>
</comment>
<comment type="similarity">
    <text evidence="1">Belongs to the MurB family.</text>
</comment>
<reference key="1">
    <citation type="journal article" date="2009" name="J. Bacteriol.">
        <title>Genome sequences of three Agrobacterium biovars help elucidate the evolution of multichromosome genomes in bacteria.</title>
        <authorList>
            <person name="Slater S.C."/>
            <person name="Goldman B.S."/>
            <person name="Goodner B."/>
            <person name="Setubal J.C."/>
            <person name="Farrand S.K."/>
            <person name="Nester E.W."/>
            <person name="Burr T.J."/>
            <person name="Banta L."/>
            <person name="Dickerman A.W."/>
            <person name="Paulsen I."/>
            <person name="Otten L."/>
            <person name="Suen G."/>
            <person name="Welch R."/>
            <person name="Almeida N.F."/>
            <person name="Arnold F."/>
            <person name="Burton O.T."/>
            <person name="Du Z."/>
            <person name="Ewing A."/>
            <person name="Godsy E."/>
            <person name="Heisel S."/>
            <person name="Houmiel K.L."/>
            <person name="Jhaveri J."/>
            <person name="Lu J."/>
            <person name="Miller N.M."/>
            <person name="Norton S."/>
            <person name="Chen Q."/>
            <person name="Phoolcharoen W."/>
            <person name="Ohlin V."/>
            <person name="Ondrusek D."/>
            <person name="Pride N."/>
            <person name="Stricklin S.L."/>
            <person name="Sun J."/>
            <person name="Wheeler C."/>
            <person name="Wilson L."/>
            <person name="Zhu H."/>
            <person name="Wood D.W."/>
        </authorList>
    </citation>
    <scope>NUCLEOTIDE SEQUENCE [LARGE SCALE GENOMIC DNA]</scope>
    <source>
        <strain>ATCC BAA-846 / DSM 112012 / S4</strain>
    </source>
</reference>
<proteinExistence type="inferred from homology"/>
<keyword id="KW-0131">Cell cycle</keyword>
<keyword id="KW-0132">Cell division</keyword>
<keyword id="KW-0133">Cell shape</keyword>
<keyword id="KW-0961">Cell wall biogenesis/degradation</keyword>
<keyword id="KW-0963">Cytoplasm</keyword>
<keyword id="KW-0274">FAD</keyword>
<keyword id="KW-0285">Flavoprotein</keyword>
<keyword id="KW-0521">NADP</keyword>
<keyword id="KW-0560">Oxidoreductase</keyword>
<keyword id="KW-0573">Peptidoglycan synthesis</keyword>
<keyword id="KW-1185">Reference proteome</keyword>
<name>MURB_ALLAM</name>
<gene>
    <name evidence="1" type="primary">murB</name>
    <name type="ordered locus">Avi_2889</name>
</gene>
<organism>
    <name type="scientific">Allorhizobium ampelinum (strain ATCC BAA-846 / DSM 112012 / S4)</name>
    <name type="common">Agrobacterium vitis (strain S4)</name>
    <dbReference type="NCBI Taxonomy" id="311402"/>
    <lineage>
        <taxon>Bacteria</taxon>
        <taxon>Pseudomonadati</taxon>
        <taxon>Pseudomonadota</taxon>
        <taxon>Alphaproteobacteria</taxon>
        <taxon>Hyphomicrobiales</taxon>
        <taxon>Rhizobiaceae</taxon>
        <taxon>Rhizobium/Agrobacterium group</taxon>
        <taxon>Allorhizobium</taxon>
        <taxon>Allorhizobium ampelinum</taxon>
    </lineage>
</organism>
<protein>
    <recommendedName>
        <fullName evidence="1">UDP-N-acetylenolpyruvoylglucosamine reductase</fullName>
        <ecNumber evidence="1">1.3.1.98</ecNumber>
    </recommendedName>
    <alternativeName>
        <fullName evidence="1">UDP-N-acetylmuramate dehydrogenase</fullName>
    </alternativeName>
</protein>
<dbReference type="EC" id="1.3.1.98" evidence="1"/>
<dbReference type="EMBL" id="CP000633">
    <property type="protein sequence ID" value="ACM37082.1"/>
    <property type="molecule type" value="Genomic_DNA"/>
</dbReference>
<dbReference type="RefSeq" id="WP_015916503.1">
    <property type="nucleotide sequence ID" value="NC_011989.1"/>
</dbReference>
<dbReference type="SMR" id="B9JY52"/>
<dbReference type="STRING" id="311402.Avi_2889"/>
<dbReference type="KEGG" id="avi:Avi_2889"/>
<dbReference type="eggNOG" id="COG0812">
    <property type="taxonomic scope" value="Bacteria"/>
</dbReference>
<dbReference type="HOGENOM" id="CLU_035304_1_0_5"/>
<dbReference type="UniPathway" id="UPA00219"/>
<dbReference type="Proteomes" id="UP000001596">
    <property type="component" value="Chromosome 1"/>
</dbReference>
<dbReference type="GO" id="GO:0005829">
    <property type="term" value="C:cytosol"/>
    <property type="evidence" value="ECO:0007669"/>
    <property type="project" value="TreeGrafter"/>
</dbReference>
<dbReference type="GO" id="GO:0071949">
    <property type="term" value="F:FAD binding"/>
    <property type="evidence" value="ECO:0007669"/>
    <property type="project" value="InterPro"/>
</dbReference>
<dbReference type="GO" id="GO:0008762">
    <property type="term" value="F:UDP-N-acetylmuramate dehydrogenase activity"/>
    <property type="evidence" value="ECO:0007669"/>
    <property type="project" value="UniProtKB-UniRule"/>
</dbReference>
<dbReference type="GO" id="GO:0051301">
    <property type="term" value="P:cell division"/>
    <property type="evidence" value="ECO:0007669"/>
    <property type="project" value="UniProtKB-KW"/>
</dbReference>
<dbReference type="GO" id="GO:0071555">
    <property type="term" value="P:cell wall organization"/>
    <property type="evidence" value="ECO:0007669"/>
    <property type="project" value="UniProtKB-KW"/>
</dbReference>
<dbReference type="GO" id="GO:0009252">
    <property type="term" value="P:peptidoglycan biosynthetic process"/>
    <property type="evidence" value="ECO:0007669"/>
    <property type="project" value="UniProtKB-UniRule"/>
</dbReference>
<dbReference type="GO" id="GO:0008360">
    <property type="term" value="P:regulation of cell shape"/>
    <property type="evidence" value="ECO:0007669"/>
    <property type="project" value="UniProtKB-KW"/>
</dbReference>
<dbReference type="Gene3D" id="3.30.465.10">
    <property type="match status" value="1"/>
</dbReference>
<dbReference type="Gene3D" id="3.90.78.10">
    <property type="entry name" value="UDP-N-acetylenolpyruvoylglucosamine reductase, C-terminal domain"/>
    <property type="match status" value="1"/>
</dbReference>
<dbReference type="Gene3D" id="3.30.43.10">
    <property type="entry name" value="Uridine Diphospho-n-acetylenolpyruvylglucosamine Reductase, domain 2"/>
    <property type="match status" value="1"/>
</dbReference>
<dbReference type="HAMAP" id="MF_00037">
    <property type="entry name" value="MurB"/>
    <property type="match status" value="1"/>
</dbReference>
<dbReference type="InterPro" id="IPR016166">
    <property type="entry name" value="FAD-bd_PCMH"/>
</dbReference>
<dbReference type="InterPro" id="IPR036318">
    <property type="entry name" value="FAD-bd_PCMH-like_sf"/>
</dbReference>
<dbReference type="InterPro" id="IPR016167">
    <property type="entry name" value="FAD-bd_PCMH_sub1"/>
</dbReference>
<dbReference type="InterPro" id="IPR016169">
    <property type="entry name" value="FAD-bd_PCMH_sub2"/>
</dbReference>
<dbReference type="InterPro" id="IPR003170">
    <property type="entry name" value="MurB"/>
</dbReference>
<dbReference type="InterPro" id="IPR011601">
    <property type="entry name" value="MurB_C"/>
</dbReference>
<dbReference type="InterPro" id="IPR036635">
    <property type="entry name" value="MurB_C_sf"/>
</dbReference>
<dbReference type="InterPro" id="IPR006094">
    <property type="entry name" value="Oxid_FAD_bind_N"/>
</dbReference>
<dbReference type="NCBIfam" id="TIGR00179">
    <property type="entry name" value="murB"/>
    <property type="match status" value="1"/>
</dbReference>
<dbReference type="NCBIfam" id="NF010480">
    <property type="entry name" value="PRK13905.1"/>
    <property type="match status" value="1"/>
</dbReference>
<dbReference type="PANTHER" id="PTHR21071">
    <property type="entry name" value="UDP-N-ACETYLENOLPYRUVOYLGLUCOSAMINE REDUCTASE"/>
    <property type="match status" value="1"/>
</dbReference>
<dbReference type="PANTHER" id="PTHR21071:SF4">
    <property type="entry name" value="UDP-N-ACETYLENOLPYRUVOYLGLUCOSAMINE REDUCTASE"/>
    <property type="match status" value="1"/>
</dbReference>
<dbReference type="Pfam" id="PF01565">
    <property type="entry name" value="FAD_binding_4"/>
    <property type="match status" value="1"/>
</dbReference>
<dbReference type="Pfam" id="PF02873">
    <property type="entry name" value="MurB_C"/>
    <property type="match status" value="1"/>
</dbReference>
<dbReference type="SUPFAM" id="SSF56176">
    <property type="entry name" value="FAD-binding/transporter-associated domain-like"/>
    <property type="match status" value="1"/>
</dbReference>
<dbReference type="SUPFAM" id="SSF56194">
    <property type="entry name" value="Uridine diphospho-N-Acetylenolpyruvylglucosamine reductase, MurB, C-terminal domain"/>
    <property type="match status" value="1"/>
</dbReference>
<dbReference type="PROSITE" id="PS51387">
    <property type="entry name" value="FAD_PCMH"/>
    <property type="match status" value="1"/>
</dbReference>
<feature type="chain" id="PRO_1000191392" description="UDP-N-acetylenolpyruvoylglucosamine reductase">
    <location>
        <begin position="1"/>
        <end position="324"/>
    </location>
</feature>
<feature type="domain" description="FAD-binding PCMH-type" evidence="1">
    <location>
        <begin position="38"/>
        <end position="217"/>
    </location>
</feature>
<feature type="active site" evidence="1">
    <location>
        <position position="183"/>
    </location>
</feature>
<feature type="active site" description="Proton donor" evidence="1">
    <location>
        <position position="232"/>
    </location>
</feature>
<feature type="active site" evidence="1">
    <location>
        <position position="302"/>
    </location>
</feature>
<evidence type="ECO:0000255" key="1">
    <source>
        <dbReference type="HAMAP-Rule" id="MF_00037"/>
    </source>
</evidence>